<comment type="subcellular location">
    <subcellularLocation>
        <location evidence="1">Cytoplasm</location>
    </subcellularLocation>
</comment>
<comment type="similarity">
    <text evidence="3">Belongs to the eukaryotic ribosomal protein eL18 family.</text>
</comment>
<sequence length="188" mass="21682">MGIDINHKYDRKVRRTEPRSQDIYLRLLVKVYRFLARRTNSKFSRIILKRLFMSRINLPPISLARVCRFMKKESRKNSIAVVVGTITDDARIFEIPKLKVCALRITEKARGRILKAGGEIITFEKLAEISPTGNKTVLMQGRRNAREAVKHFGPAPGVPHSHTKPLVRSKGRKFERARGRRKSCGYKK</sequence>
<dbReference type="EMBL" id="AY961532">
    <property type="protein sequence ID" value="AAX62434.1"/>
    <property type="molecule type" value="mRNA"/>
</dbReference>
<dbReference type="SMR" id="Q56FG8"/>
<dbReference type="GO" id="GO:0022625">
    <property type="term" value="C:cytosolic large ribosomal subunit"/>
    <property type="evidence" value="ECO:0007669"/>
    <property type="project" value="TreeGrafter"/>
</dbReference>
<dbReference type="GO" id="GO:0003723">
    <property type="term" value="F:RNA binding"/>
    <property type="evidence" value="ECO:0007669"/>
    <property type="project" value="TreeGrafter"/>
</dbReference>
<dbReference type="GO" id="GO:0003735">
    <property type="term" value="F:structural constituent of ribosome"/>
    <property type="evidence" value="ECO:0007669"/>
    <property type="project" value="InterPro"/>
</dbReference>
<dbReference type="GO" id="GO:0006412">
    <property type="term" value="P:translation"/>
    <property type="evidence" value="ECO:0007669"/>
    <property type="project" value="InterPro"/>
</dbReference>
<dbReference type="FunFam" id="3.100.10.10:FF:000001">
    <property type="entry name" value="60S ribosomal protein L18"/>
    <property type="match status" value="1"/>
</dbReference>
<dbReference type="Gene3D" id="3.100.10.10">
    <property type="match status" value="1"/>
</dbReference>
<dbReference type="InterPro" id="IPR000039">
    <property type="entry name" value="Ribosomal_eL18"/>
</dbReference>
<dbReference type="InterPro" id="IPR021131">
    <property type="entry name" value="Ribosomal_uL15/eL18"/>
</dbReference>
<dbReference type="InterPro" id="IPR036227">
    <property type="entry name" value="Ribosomal_uL15/eL18_sf"/>
</dbReference>
<dbReference type="PANTHER" id="PTHR10934">
    <property type="entry name" value="60S RIBOSOMAL PROTEIN L18"/>
    <property type="match status" value="1"/>
</dbReference>
<dbReference type="PANTHER" id="PTHR10934:SF2">
    <property type="entry name" value="LARGE RIBOSOMAL SUBUNIT PROTEIN EL18"/>
    <property type="match status" value="1"/>
</dbReference>
<dbReference type="Pfam" id="PF17135">
    <property type="entry name" value="Ribosomal_L18"/>
    <property type="match status" value="1"/>
</dbReference>
<dbReference type="SUPFAM" id="SSF52080">
    <property type="entry name" value="Ribosomal proteins L15p and L18e"/>
    <property type="match status" value="1"/>
</dbReference>
<keyword id="KW-0963">Cytoplasm</keyword>
<keyword id="KW-0687">Ribonucleoprotein</keyword>
<keyword id="KW-0689">Ribosomal protein</keyword>
<reference key="1">
    <citation type="submission" date="2005-03" db="EMBL/GenBank/DDBJ databases">
        <title>Ribosomal protein sequences from Lysiphlebus testaceipes.</title>
        <authorList>
            <person name="Weathersbee A.A. III"/>
            <person name="Hunter W.B."/>
            <person name="Panchal T.D."/>
            <person name="Dang P.M."/>
        </authorList>
    </citation>
    <scope>NUCLEOTIDE SEQUENCE [MRNA]</scope>
    <source>
        <strain>Florida</strain>
    </source>
</reference>
<accession>Q56FG8</accession>
<proteinExistence type="evidence at transcript level"/>
<evidence type="ECO:0000250" key="1"/>
<evidence type="ECO:0000256" key="2">
    <source>
        <dbReference type="SAM" id="MobiDB-lite"/>
    </source>
</evidence>
<evidence type="ECO:0000305" key="3"/>
<gene>
    <name type="primary">RpL18</name>
</gene>
<protein>
    <recommendedName>
        <fullName evidence="3">Large ribosomal subunit protein eL18</fullName>
    </recommendedName>
    <alternativeName>
        <fullName>60S ribosomal protein L18</fullName>
    </alternativeName>
</protein>
<organism>
    <name type="scientific">Lysiphlebus testaceipes</name>
    <name type="common">Greenbugs aphid parastoid</name>
    <dbReference type="NCBI Taxonomy" id="77504"/>
    <lineage>
        <taxon>Eukaryota</taxon>
        <taxon>Metazoa</taxon>
        <taxon>Ecdysozoa</taxon>
        <taxon>Arthropoda</taxon>
        <taxon>Hexapoda</taxon>
        <taxon>Insecta</taxon>
        <taxon>Pterygota</taxon>
        <taxon>Neoptera</taxon>
        <taxon>Endopterygota</taxon>
        <taxon>Hymenoptera</taxon>
        <taxon>Apocrita</taxon>
        <taxon>Ichneumonoidea</taxon>
        <taxon>Braconidae</taxon>
        <taxon>Aphidiinae</taxon>
        <taxon>Lysiphlebus</taxon>
    </lineage>
</organism>
<feature type="chain" id="PRO_0000291631" description="Large ribosomal subunit protein eL18">
    <location>
        <begin position="1"/>
        <end position="188"/>
    </location>
</feature>
<feature type="region of interest" description="Disordered" evidence="2">
    <location>
        <begin position="151"/>
        <end position="188"/>
    </location>
</feature>
<feature type="compositionally biased region" description="Basic residues" evidence="2">
    <location>
        <begin position="161"/>
        <end position="171"/>
    </location>
</feature>
<feature type="compositionally biased region" description="Basic residues" evidence="2">
    <location>
        <begin position="178"/>
        <end position="188"/>
    </location>
</feature>
<name>RL18_LYSTE</name>